<organism>
    <name type="scientific">Homo sapiens</name>
    <name type="common">Human</name>
    <dbReference type="NCBI Taxonomy" id="9606"/>
    <lineage>
        <taxon>Eukaryota</taxon>
        <taxon>Metazoa</taxon>
        <taxon>Chordata</taxon>
        <taxon>Craniata</taxon>
        <taxon>Vertebrata</taxon>
        <taxon>Euteleostomi</taxon>
        <taxon>Mammalia</taxon>
        <taxon>Eutheria</taxon>
        <taxon>Euarchontoglires</taxon>
        <taxon>Primates</taxon>
        <taxon>Haplorrhini</taxon>
        <taxon>Catarrhini</taxon>
        <taxon>Hominidae</taxon>
        <taxon>Homo</taxon>
    </lineage>
</organism>
<evidence type="ECO:0000255" key="1">
    <source>
        <dbReference type="PROSITE-ProRule" id="PRU00127"/>
    </source>
</evidence>
<evidence type="ECO:0000256" key="2">
    <source>
        <dbReference type="SAM" id="MobiDB-lite"/>
    </source>
</evidence>
<protein>
    <recommendedName>
        <fullName>Melanoma-associated antigen B16</fullName>
    </recommendedName>
    <alternativeName>
        <fullName>MAGE-B16 antigen</fullName>
    </alternativeName>
</protein>
<dbReference type="EMBL" id="AL161722">
    <property type="status" value="NOT_ANNOTATED_CDS"/>
    <property type="molecule type" value="Genomic_DNA"/>
</dbReference>
<dbReference type="CCDS" id="CCDS43927.1"/>
<dbReference type="RefSeq" id="NP_001093391.1">
    <property type="nucleotide sequence ID" value="NM_001099921.2"/>
</dbReference>
<dbReference type="RefSeq" id="NP_001357087.1">
    <property type="nucleotide sequence ID" value="NM_001370158.1"/>
</dbReference>
<dbReference type="RefSeq" id="NP_001357088.1">
    <property type="nucleotide sequence ID" value="NM_001370159.1"/>
</dbReference>
<dbReference type="RefSeq" id="XP_011543755.1">
    <property type="nucleotide sequence ID" value="XM_011545453.2"/>
</dbReference>
<dbReference type="RefSeq" id="XP_011543756.1">
    <property type="nucleotide sequence ID" value="XM_011545454.2"/>
</dbReference>
<dbReference type="SMR" id="A2A368"/>
<dbReference type="BioGRID" id="126578">
    <property type="interactions" value="1"/>
</dbReference>
<dbReference type="FunCoup" id="A2A368">
    <property type="interactions" value="38"/>
</dbReference>
<dbReference type="IntAct" id="A2A368">
    <property type="interactions" value="1"/>
</dbReference>
<dbReference type="STRING" id="9606.ENSP00000382871"/>
<dbReference type="iPTMnet" id="A2A368"/>
<dbReference type="PhosphoSitePlus" id="A2A368"/>
<dbReference type="BioMuta" id="MAGEB16"/>
<dbReference type="jPOST" id="A2A368"/>
<dbReference type="MassIVE" id="A2A368"/>
<dbReference type="PaxDb" id="9606-ENSP00000382871"/>
<dbReference type="PeptideAtlas" id="A2A368"/>
<dbReference type="ProteomicsDB" id="253"/>
<dbReference type="Antibodypedia" id="64810">
    <property type="antibodies" value="57 antibodies from 11 providers"/>
</dbReference>
<dbReference type="DNASU" id="139604"/>
<dbReference type="Ensembl" id="ENST00000399985.1">
    <property type="protein sequence ID" value="ENSP00000382867.1"/>
    <property type="gene ID" value="ENSG00000189023.11"/>
</dbReference>
<dbReference type="Ensembl" id="ENST00000399987.5">
    <property type="protein sequence ID" value="ENSP00000382869.1"/>
    <property type="gene ID" value="ENSG00000189023.11"/>
</dbReference>
<dbReference type="Ensembl" id="ENST00000399988.6">
    <property type="protein sequence ID" value="ENSP00000382870.1"/>
    <property type="gene ID" value="ENSG00000189023.11"/>
</dbReference>
<dbReference type="Ensembl" id="ENST00000399989.5">
    <property type="protein sequence ID" value="ENSP00000382871.1"/>
    <property type="gene ID" value="ENSG00000189023.11"/>
</dbReference>
<dbReference type="GeneID" id="139604"/>
<dbReference type="KEGG" id="hsa:139604"/>
<dbReference type="MANE-Select" id="ENST00000399988.6">
    <property type="protein sequence ID" value="ENSP00000382870.1"/>
    <property type="RefSeq nucleotide sequence ID" value="NM_001370158.1"/>
    <property type="RefSeq protein sequence ID" value="NP_001357087.1"/>
</dbReference>
<dbReference type="UCSC" id="uc010ngt.1">
    <property type="organism name" value="human"/>
</dbReference>
<dbReference type="AGR" id="HGNC:21188"/>
<dbReference type="CTD" id="139604"/>
<dbReference type="GeneCards" id="MAGEB16"/>
<dbReference type="HGNC" id="HGNC:21188">
    <property type="gene designation" value="MAGEB16"/>
</dbReference>
<dbReference type="HPA" id="ENSG00000189023">
    <property type="expression patterns" value="Tissue enriched (testis)"/>
</dbReference>
<dbReference type="MIM" id="300762">
    <property type="type" value="gene"/>
</dbReference>
<dbReference type="neXtProt" id="NX_A2A368"/>
<dbReference type="OpenTargets" id="ENSG00000189023"/>
<dbReference type="PharmGKB" id="PA134922508"/>
<dbReference type="VEuPathDB" id="HostDB:ENSG00000189023"/>
<dbReference type="eggNOG" id="KOG4562">
    <property type="taxonomic scope" value="Eukaryota"/>
</dbReference>
<dbReference type="GeneTree" id="ENSGT00940000162825"/>
<dbReference type="HOGENOM" id="CLU_039582_1_0_1"/>
<dbReference type="InParanoid" id="A2A368"/>
<dbReference type="OMA" id="ECEDHFT"/>
<dbReference type="OrthoDB" id="205198at2759"/>
<dbReference type="PAN-GO" id="A2A368">
    <property type="GO annotations" value="2 GO annotations based on evolutionary models"/>
</dbReference>
<dbReference type="PhylomeDB" id="A2A368"/>
<dbReference type="TreeFam" id="TF328505"/>
<dbReference type="PathwayCommons" id="A2A368"/>
<dbReference type="SignaLink" id="A2A368"/>
<dbReference type="BioGRID-ORCS" id="139604">
    <property type="hits" value="13 hits in 770 CRISPR screens"/>
</dbReference>
<dbReference type="GenomeRNAi" id="139604"/>
<dbReference type="Pharos" id="A2A368">
    <property type="development level" value="Tdark"/>
</dbReference>
<dbReference type="PRO" id="PR:A2A368"/>
<dbReference type="Proteomes" id="UP000005640">
    <property type="component" value="Chromosome X"/>
</dbReference>
<dbReference type="RNAct" id="A2A368">
    <property type="molecule type" value="protein"/>
</dbReference>
<dbReference type="Bgee" id="ENSG00000189023">
    <property type="expression patterns" value="Expressed in primordial germ cell in gonad and 4 other cell types or tissues"/>
</dbReference>
<dbReference type="ExpressionAtlas" id="A2A368">
    <property type="expression patterns" value="baseline and differential"/>
</dbReference>
<dbReference type="GO" id="GO:0005634">
    <property type="term" value="C:nucleus"/>
    <property type="evidence" value="ECO:0000318"/>
    <property type="project" value="GO_Central"/>
</dbReference>
<dbReference type="GO" id="GO:0000122">
    <property type="term" value="P:negative regulation of transcription by RNA polymerase II"/>
    <property type="evidence" value="ECO:0000318"/>
    <property type="project" value="GO_Central"/>
</dbReference>
<dbReference type="FunFam" id="1.10.10.1200:FF:000007">
    <property type="entry name" value="Melanoma-associated antigen C2"/>
    <property type="match status" value="1"/>
</dbReference>
<dbReference type="FunFam" id="1.10.10.1210:FF:000001">
    <property type="entry name" value="melanoma-associated antigen D1"/>
    <property type="match status" value="1"/>
</dbReference>
<dbReference type="Gene3D" id="1.10.10.1200">
    <property type="entry name" value="MAGE homology domain, winged helix WH1 motif"/>
    <property type="match status" value="1"/>
</dbReference>
<dbReference type="Gene3D" id="1.10.10.1210">
    <property type="entry name" value="MAGE homology domain, winged helix WH2 motif"/>
    <property type="match status" value="1"/>
</dbReference>
<dbReference type="InterPro" id="IPR037445">
    <property type="entry name" value="MAGE"/>
</dbReference>
<dbReference type="InterPro" id="IPR021072">
    <property type="entry name" value="MAGE_N"/>
</dbReference>
<dbReference type="InterPro" id="IPR041898">
    <property type="entry name" value="MAGE_WH1"/>
</dbReference>
<dbReference type="InterPro" id="IPR041899">
    <property type="entry name" value="MAGE_WH2"/>
</dbReference>
<dbReference type="InterPro" id="IPR002190">
    <property type="entry name" value="MHD_dom"/>
</dbReference>
<dbReference type="PANTHER" id="PTHR11736:SF145">
    <property type="entry name" value="MELANOMA-ASSOCIATED ANTIGEN B16"/>
    <property type="match status" value="1"/>
</dbReference>
<dbReference type="PANTHER" id="PTHR11736">
    <property type="entry name" value="MELANOMA-ASSOCIATED ANTIGEN MAGE ANTIGEN"/>
    <property type="match status" value="1"/>
</dbReference>
<dbReference type="Pfam" id="PF01454">
    <property type="entry name" value="MAGE"/>
    <property type="match status" value="1"/>
</dbReference>
<dbReference type="Pfam" id="PF12440">
    <property type="entry name" value="MAGE_N"/>
    <property type="match status" value="1"/>
</dbReference>
<dbReference type="SMART" id="SM01373">
    <property type="entry name" value="MAGE"/>
    <property type="match status" value="1"/>
</dbReference>
<dbReference type="SMART" id="SM01392">
    <property type="entry name" value="MAGE_N"/>
    <property type="match status" value="1"/>
</dbReference>
<dbReference type="PROSITE" id="PS50838">
    <property type="entry name" value="MAGE"/>
    <property type="match status" value="1"/>
</dbReference>
<accession>A2A368</accession>
<accession>A8MU30</accession>
<feature type="chain" id="PRO_0000311928" description="Melanoma-associated antigen B16">
    <location>
        <begin position="1"/>
        <end position="324"/>
    </location>
</feature>
<feature type="domain" description="MAGE" evidence="1">
    <location>
        <begin position="113"/>
        <end position="312"/>
    </location>
</feature>
<feature type="region of interest" description="Disordered" evidence="2">
    <location>
        <begin position="1"/>
        <end position="22"/>
    </location>
</feature>
<feature type="region of interest" description="Disordered" evidence="2">
    <location>
        <begin position="39"/>
        <end position="108"/>
    </location>
</feature>
<feature type="compositionally biased region" description="Basic and acidic residues" evidence="2">
    <location>
        <begin position="1"/>
        <end position="15"/>
    </location>
</feature>
<feature type="compositionally biased region" description="Low complexity" evidence="2">
    <location>
        <begin position="70"/>
        <end position="81"/>
    </location>
</feature>
<feature type="compositionally biased region" description="Acidic residues" evidence="2">
    <location>
        <begin position="82"/>
        <end position="95"/>
    </location>
</feature>
<feature type="sequence variant" id="VAR_037350" description="In dbSNP:rs1410961.">
    <original>L</original>
    <variation>F</variation>
    <location>
        <position position="38"/>
    </location>
</feature>
<feature type="sequence variant" id="VAR_037351" description="In dbSNP:rs1410962.">
    <original>C</original>
    <variation>Y</variation>
    <location>
        <position position="128"/>
    </location>
</feature>
<feature type="sequence variant" id="VAR_037352" description="In dbSNP:rs5973488.">
    <original>H</original>
    <variation>R</variation>
    <location>
        <position position="161"/>
    </location>
</feature>
<feature type="sequence variant" id="VAR_037354" description="In dbSNP:rs4829391.">
    <original>M</original>
    <variation>K</variation>
    <location>
        <position position="248"/>
    </location>
</feature>
<feature type="sequence variant" id="VAR_037353" description="In dbSNP:rs4829390.">
    <original>M</original>
    <variation>V</variation>
    <location>
        <position position="248"/>
    </location>
</feature>
<gene>
    <name type="primary">MAGEB16</name>
</gene>
<sequence length="324" mass="36178">MSQDQESPRCTHDQHLQTFSETQSLEVAQVSKALEKTLLSSSHPLVPGKLKEAPAAKAESPLEVPQSFCSSSIAVTTTSSSESDEASSNQEEEDSPSSSEDTSDPRNVPADALDQKVAFLVNFMLHKCQMKKPITKADMLKIIIKDDESHFSEILLRASEHLEMIFGLDVVEVDPTTHCYGLFIKLGLTYDGMLSGEKGVPKTGLLIIVLGVIFMKGNRATEEEVWEVLNLTGVYSGKKHFIFGEPRMLITKDFVKEKYLEYQQVANSDPARYEFLWGPRAKAETSKMKVLEFVAKVHGSYPHSFPSQYAEALKEEEERARARI</sequence>
<reference key="1">
    <citation type="journal article" date="2005" name="Nature">
        <title>The DNA sequence of the human X chromosome.</title>
        <authorList>
            <person name="Ross M.T."/>
            <person name="Grafham D.V."/>
            <person name="Coffey A.J."/>
            <person name="Scherer S."/>
            <person name="McLay K."/>
            <person name="Muzny D."/>
            <person name="Platzer M."/>
            <person name="Howell G.R."/>
            <person name="Burrows C."/>
            <person name="Bird C.P."/>
            <person name="Frankish A."/>
            <person name="Lovell F.L."/>
            <person name="Howe K.L."/>
            <person name="Ashurst J.L."/>
            <person name="Fulton R.S."/>
            <person name="Sudbrak R."/>
            <person name="Wen G."/>
            <person name="Jones M.C."/>
            <person name="Hurles M.E."/>
            <person name="Andrews T.D."/>
            <person name="Scott C.E."/>
            <person name="Searle S."/>
            <person name="Ramser J."/>
            <person name="Whittaker A."/>
            <person name="Deadman R."/>
            <person name="Carter N.P."/>
            <person name="Hunt S.E."/>
            <person name="Chen R."/>
            <person name="Cree A."/>
            <person name="Gunaratne P."/>
            <person name="Havlak P."/>
            <person name="Hodgson A."/>
            <person name="Metzker M.L."/>
            <person name="Richards S."/>
            <person name="Scott G."/>
            <person name="Steffen D."/>
            <person name="Sodergren E."/>
            <person name="Wheeler D.A."/>
            <person name="Worley K.C."/>
            <person name="Ainscough R."/>
            <person name="Ambrose K.D."/>
            <person name="Ansari-Lari M.A."/>
            <person name="Aradhya S."/>
            <person name="Ashwell R.I."/>
            <person name="Babbage A.K."/>
            <person name="Bagguley C.L."/>
            <person name="Ballabio A."/>
            <person name="Banerjee R."/>
            <person name="Barker G.E."/>
            <person name="Barlow K.F."/>
            <person name="Barrett I.P."/>
            <person name="Bates K.N."/>
            <person name="Beare D.M."/>
            <person name="Beasley H."/>
            <person name="Beasley O."/>
            <person name="Beck A."/>
            <person name="Bethel G."/>
            <person name="Blechschmidt K."/>
            <person name="Brady N."/>
            <person name="Bray-Allen S."/>
            <person name="Bridgeman A.M."/>
            <person name="Brown A.J."/>
            <person name="Brown M.J."/>
            <person name="Bonnin D."/>
            <person name="Bruford E.A."/>
            <person name="Buhay C."/>
            <person name="Burch P."/>
            <person name="Burford D."/>
            <person name="Burgess J."/>
            <person name="Burrill W."/>
            <person name="Burton J."/>
            <person name="Bye J.M."/>
            <person name="Carder C."/>
            <person name="Carrel L."/>
            <person name="Chako J."/>
            <person name="Chapman J.C."/>
            <person name="Chavez D."/>
            <person name="Chen E."/>
            <person name="Chen G."/>
            <person name="Chen Y."/>
            <person name="Chen Z."/>
            <person name="Chinault C."/>
            <person name="Ciccodicola A."/>
            <person name="Clark S.Y."/>
            <person name="Clarke G."/>
            <person name="Clee C.M."/>
            <person name="Clegg S."/>
            <person name="Clerc-Blankenburg K."/>
            <person name="Clifford K."/>
            <person name="Cobley V."/>
            <person name="Cole C.G."/>
            <person name="Conquer J.S."/>
            <person name="Corby N."/>
            <person name="Connor R.E."/>
            <person name="David R."/>
            <person name="Davies J."/>
            <person name="Davis C."/>
            <person name="Davis J."/>
            <person name="Delgado O."/>
            <person name="Deshazo D."/>
            <person name="Dhami P."/>
            <person name="Ding Y."/>
            <person name="Dinh H."/>
            <person name="Dodsworth S."/>
            <person name="Draper H."/>
            <person name="Dugan-Rocha S."/>
            <person name="Dunham A."/>
            <person name="Dunn M."/>
            <person name="Durbin K.J."/>
            <person name="Dutta I."/>
            <person name="Eades T."/>
            <person name="Ellwood M."/>
            <person name="Emery-Cohen A."/>
            <person name="Errington H."/>
            <person name="Evans K.L."/>
            <person name="Faulkner L."/>
            <person name="Francis F."/>
            <person name="Frankland J."/>
            <person name="Fraser A.E."/>
            <person name="Galgoczy P."/>
            <person name="Gilbert J."/>
            <person name="Gill R."/>
            <person name="Gloeckner G."/>
            <person name="Gregory S.G."/>
            <person name="Gribble S."/>
            <person name="Griffiths C."/>
            <person name="Grocock R."/>
            <person name="Gu Y."/>
            <person name="Gwilliam R."/>
            <person name="Hamilton C."/>
            <person name="Hart E.A."/>
            <person name="Hawes A."/>
            <person name="Heath P.D."/>
            <person name="Heitmann K."/>
            <person name="Hennig S."/>
            <person name="Hernandez J."/>
            <person name="Hinzmann B."/>
            <person name="Ho S."/>
            <person name="Hoffs M."/>
            <person name="Howden P.J."/>
            <person name="Huckle E.J."/>
            <person name="Hume J."/>
            <person name="Hunt P.J."/>
            <person name="Hunt A.R."/>
            <person name="Isherwood J."/>
            <person name="Jacob L."/>
            <person name="Johnson D."/>
            <person name="Jones S."/>
            <person name="de Jong P.J."/>
            <person name="Joseph S.S."/>
            <person name="Keenan S."/>
            <person name="Kelly S."/>
            <person name="Kershaw J.K."/>
            <person name="Khan Z."/>
            <person name="Kioschis P."/>
            <person name="Klages S."/>
            <person name="Knights A.J."/>
            <person name="Kosiura A."/>
            <person name="Kovar-Smith C."/>
            <person name="Laird G.K."/>
            <person name="Langford C."/>
            <person name="Lawlor S."/>
            <person name="Leversha M."/>
            <person name="Lewis L."/>
            <person name="Liu W."/>
            <person name="Lloyd C."/>
            <person name="Lloyd D.M."/>
            <person name="Loulseged H."/>
            <person name="Loveland J.E."/>
            <person name="Lovell J.D."/>
            <person name="Lozado R."/>
            <person name="Lu J."/>
            <person name="Lyne R."/>
            <person name="Ma J."/>
            <person name="Maheshwari M."/>
            <person name="Matthews L.H."/>
            <person name="McDowall J."/>
            <person name="McLaren S."/>
            <person name="McMurray A."/>
            <person name="Meidl P."/>
            <person name="Meitinger T."/>
            <person name="Milne S."/>
            <person name="Miner G."/>
            <person name="Mistry S.L."/>
            <person name="Morgan M."/>
            <person name="Morris S."/>
            <person name="Mueller I."/>
            <person name="Mullikin J.C."/>
            <person name="Nguyen N."/>
            <person name="Nordsiek G."/>
            <person name="Nyakatura G."/>
            <person name="O'dell C.N."/>
            <person name="Okwuonu G."/>
            <person name="Palmer S."/>
            <person name="Pandian R."/>
            <person name="Parker D."/>
            <person name="Parrish J."/>
            <person name="Pasternak S."/>
            <person name="Patel D."/>
            <person name="Pearce A.V."/>
            <person name="Pearson D.M."/>
            <person name="Pelan S.E."/>
            <person name="Perez L."/>
            <person name="Porter K.M."/>
            <person name="Ramsey Y."/>
            <person name="Reichwald K."/>
            <person name="Rhodes S."/>
            <person name="Ridler K.A."/>
            <person name="Schlessinger D."/>
            <person name="Schueler M.G."/>
            <person name="Sehra H.K."/>
            <person name="Shaw-Smith C."/>
            <person name="Shen H."/>
            <person name="Sheridan E.M."/>
            <person name="Shownkeen R."/>
            <person name="Skuce C.D."/>
            <person name="Smith M.L."/>
            <person name="Sotheran E.C."/>
            <person name="Steingruber H.E."/>
            <person name="Steward C.A."/>
            <person name="Storey R."/>
            <person name="Swann R.M."/>
            <person name="Swarbreck D."/>
            <person name="Tabor P.E."/>
            <person name="Taudien S."/>
            <person name="Taylor T."/>
            <person name="Teague B."/>
            <person name="Thomas K."/>
            <person name="Thorpe A."/>
            <person name="Timms K."/>
            <person name="Tracey A."/>
            <person name="Trevanion S."/>
            <person name="Tromans A.C."/>
            <person name="d'Urso M."/>
            <person name="Verduzco D."/>
            <person name="Villasana D."/>
            <person name="Waldron L."/>
            <person name="Wall M."/>
            <person name="Wang Q."/>
            <person name="Warren J."/>
            <person name="Warry G.L."/>
            <person name="Wei X."/>
            <person name="West A."/>
            <person name="Whitehead S.L."/>
            <person name="Whiteley M.N."/>
            <person name="Wilkinson J.E."/>
            <person name="Willey D.L."/>
            <person name="Williams G."/>
            <person name="Williams L."/>
            <person name="Williamson A."/>
            <person name="Williamson H."/>
            <person name="Wilming L."/>
            <person name="Woodmansey R.L."/>
            <person name="Wray P.W."/>
            <person name="Yen J."/>
            <person name="Zhang J."/>
            <person name="Zhou J."/>
            <person name="Zoghbi H."/>
            <person name="Zorilla S."/>
            <person name="Buck D."/>
            <person name="Reinhardt R."/>
            <person name="Poustka A."/>
            <person name="Rosenthal A."/>
            <person name="Lehrach H."/>
            <person name="Meindl A."/>
            <person name="Minx P.J."/>
            <person name="Hillier L.W."/>
            <person name="Willard H.F."/>
            <person name="Wilson R.K."/>
            <person name="Waterston R.H."/>
            <person name="Rice C.M."/>
            <person name="Vaudin M."/>
            <person name="Coulson A."/>
            <person name="Nelson D.L."/>
            <person name="Weinstock G."/>
            <person name="Sulston J.E."/>
            <person name="Durbin R.M."/>
            <person name="Hubbard T."/>
            <person name="Gibbs R.A."/>
            <person name="Beck S."/>
            <person name="Rogers J."/>
            <person name="Bentley D.R."/>
        </authorList>
    </citation>
    <scope>NUCLEOTIDE SEQUENCE [LARGE SCALE GENOMIC DNA]</scope>
</reference>
<keyword id="KW-1185">Reference proteome</keyword>
<keyword id="KW-0825">Tumor antigen</keyword>
<proteinExistence type="predicted"/>
<name>MAGBG_HUMAN</name>